<dbReference type="EMBL" id="AB091727">
    <property type="protein sequence ID" value="BAC66000.1"/>
    <property type="molecule type" value="Genomic_RNA"/>
</dbReference>
<dbReference type="SMR" id="Q80IQ5"/>
<dbReference type="GO" id="GO:0030430">
    <property type="term" value="C:host cell cytoplasm"/>
    <property type="evidence" value="ECO:0007669"/>
    <property type="project" value="UniProtKB-SubCell"/>
</dbReference>
<dbReference type="GO" id="GO:0016887">
    <property type="term" value="F:ATP hydrolysis activity"/>
    <property type="evidence" value="ECO:0007669"/>
    <property type="project" value="InterPro"/>
</dbReference>
<dbReference type="GO" id="GO:0000287">
    <property type="term" value="F:magnesium ion binding"/>
    <property type="evidence" value="ECO:0007669"/>
    <property type="project" value="InterPro"/>
</dbReference>
<dbReference type="GO" id="GO:0000166">
    <property type="term" value="F:nucleotide binding"/>
    <property type="evidence" value="ECO:0007669"/>
    <property type="project" value="UniProtKB-KW"/>
</dbReference>
<dbReference type="GO" id="GO:0003723">
    <property type="term" value="F:RNA binding"/>
    <property type="evidence" value="ECO:0007669"/>
    <property type="project" value="UniProtKB-KW"/>
</dbReference>
<dbReference type="GO" id="GO:0019079">
    <property type="term" value="P:viral genome replication"/>
    <property type="evidence" value="ECO:0007669"/>
    <property type="project" value="InterPro"/>
</dbReference>
<dbReference type="HAMAP" id="MF_04092">
    <property type="entry name" value="ROTA_NSP5"/>
    <property type="match status" value="1"/>
</dbReference>
<dbReference type="InterPro" id="IPR002512">
    <property type="entry name" value="Rotavirus_A/C_NSP5"/>
</dbReference>
<dbReference type="Pfam" id="PF01525">
    <property type="entry name" value="Rota_NS26"/>
    <property type="match status" value="2"/>
</dbReference>
<dbReference type="PIRSF" id="PIRSF004006">
    <property type="entry name" value="Rota_NS26"/>
    <property type="match status" value="1"/>
</dbReference>
<sequence>SLSIDVTSLPSISSSVYKNESFSTTSTISGKSIGRSEQYISPDAEAFNKYMLSKSPEDIGPSDSASNDPLTSFSIRSNAVKTNADAGVSMDSSAQSRPSSDIGYDQMDFSLNKGIKIDATVDSSISISTTSKKEKSKQENKNKYKKCYPKIEAESDSDDYVLDDSDSDDGKCKNCKYKKKYFALRLRMKQVAMQLIKDL</sequence>
<feature type="chain" id="PRO_0000369502" description="Non-structural protein 5">
    <location>
        <begin position="1" status="less than"/>
        <end position="199"/>
    </location>
</feature>
<feature type="region of interest" description="Interaction with VP1">
    <location>
        <begin position="1" status="less than"/>
        <end position="48"/>
    </location>
</feature>
<feature type="region of interest" description="Disordered" evidence="2">
    <location>
        <begin position="52"/>
        <end position="71"/>
    </location>
</feature>
<feature type="region of interest" description="Disordered" evidence="2">
    <location>
        <begin position="85"/>
        <end position="105"/>
    </location>
</feature>
<feature type="compositionally biased region" description="Polar residues" evidence="2">
    <location>
        <begin position="90"/>
        <end position="99"/>
    </location>
</feature>
<feature type="binding site" evidence="1">
    <location>
        <position position="91"/>
    </location>
    <ligand>
        <name>Mg(2+)</name>
        <dbReference type="ChEBI" id="CHEBI:18420"/>
    </ligand>
</feature>
<feature type="modified residue" description="Phosphoserine; by host CK1" evidence="1">
    <location>
        <position position="66"/>
    </location>
</feature>
<feature type="modified residue" description="Phosphoserine; by host" evidence="1">
    <location>
        <position position="155"/>
    </location>
</feature>
<feature type="modified residue" description="Phosphoserine; by host" evidence="1">
    <location>
        <position position="157"/>
    </location>
</feature>
<feature type="modified residue" description="Phosphoserine; by host" evidence="1">
    <location>
        <position position="165"/>
    </location>
</feature>
<feature type="modified residue" description="Phosphoserine; by host" evidence="1">
    <location>
        <position position="167"/>
    </location>
</feature>
<feature type="non-terminal residue">
    <location>
        <position position="1"/>
    </location>
</feature>
<name>NSP5_ROTKU</name>
<organism>
    <name type="scientific">Rotavirus A (strain RVA/Human/Japan/KUN/1980/G2P1B[4])</name>
    <name type="common">RV-A</name>
    <dbReference type="NCBI Taxonomy" id="578829"/>
    <lineage>
        <taxon>Viruses</taxon>
        <taxon>Riboviria</taxon>
        <taxon>Orthornavirae</taxon>
        <taxon>Duplornaviricota</taxon>
        <taxon>Resentoviricetes</taxon>
        <taxon>Reovirales</taxon>
        <taxon>Sedoreoviridae</taxon>
        <taxon>Rotavirus</taxon>
        <taxon>Rotavirus A</taxon>
    </lineage>
</organism>
<protein>
    <recommendedName>
        <fullName evidence="1">Non-structural protein 5</fullName>
        <shortName evidence="1">NSP5</shortName>
    </recommendedName>
    <alternativeName>
        <fullName evidence="1">NS26</fullName>
    </alternativeName>
</protein>
<evidence type="ECO:0000255" key="1">
    <source>
        <dbReference type="HAMAP-Rule" id="MF_04092"/>
    </source>
</evidence>
<evidence type="ECO:0000256" key="2">
    <source>
        <dbReference type="SAM" id="MobiDB-lite"/>
    </source>
</evidence>
<accession>Q80IQ5</accession>
<reference key="1">
    <citation type="submission" date="2002-09" db="EMBL/GenBank/DDBJ databases">
        <title>Isolation and molecular characterization of a naturally occurring single nonstructural gene (NSP5) reassortant of group A rotavirus that possesses serotype G2P [4] yet a long RNA pattern.</title>
        <authorList>
            <person name="Watanabe M."/>
            <person name="Nakagomi O."/>
        </authorList>
    </citation>
    <scope>NUCLEOTIDE SEQUENCE [GENOMIC RNA]</scope>
</reference>
<proteinExistence type="inferred from homology"/>
<organismHost>
    <name type="scientific">Homo sapiens</name>
    <name type="common">Human</name>
    <dbReference type="NCBI Taxonomy" id="9606"/>
</organismHost>
<keyword id="KW-0325">Glycoprotein</keyword>
<keyword id="KW-1035">Host cytoplasm</keyword>
<keyword id="KW-0460">Magnesium</keyword>
<keyword id="KW-0479">Metal-binding</keyword>
<keyword id="KW-0547">Nucleotide-binding</keyword>
<keyword id="KW-0597">Phosphoprotein</keyword>
<keyword id="KW-0694">RNA-binding</keyword>
<comment type="function">
    <text evidence="1">Plays an essential role in the viral genome replication. Participates, together with NSP2, in the formation of viral factories (viroplasms) which are large inclusions in the host cytoplasm where replication intermediates are assembled and viral RNA replication takes place. Orchestrates the recruitment of viroplasmic proteins such as capsid proteins to these factories.</text>
</comment>
<comment type="cofactor">
    <cofactor evidence="1">
        <name>Mg(2+)</name>
        <dbReference type="ChEBI" id="CHEBI:18420"/>
    </cofactor>
</comment>
<comment type="subunit">
    <text evidence="1">Homodimer. Interacts with VP1. Interacts with VP2. Interacts with NSP2; this interaction leads to up-regulation of NSP5 hyperphosphorylation and formation of virus factories. Interacts with NSP6.</text>
</comment>
<comment type="subcellular location">
    <subcellularLocation>
        <location evidence="1">Host cytoplasm</location>
    </subcellularLocation>
    <text evidence="1">Found in spherical cytoplasmic structures, called virus factories, that appear early after infection and are the site of viral replication and packaging.</text>
</comment>
<comment type="PTM">
    <text evidence="1">O-glycosylated.</text>
</comment>
<comment type="PTM">
    <text evidence="1">Hyperphosphorylated on serine residues, when in dimeric form. Phosphorylation by host CK1 is required for the hyperphosphorylation of NSP5 dimer.</text>
</comment>
<comment type="similarity">
    <text evidence="1">Belongs to the rotavirus NSP5 family.</text>
</comment>